<feature type="chain" id="PRO_0000422557" description="Flavonoid 3',5'-methyltransferase">
    <location>
        <begin position="1"/>
        <end position="235"/>
    </location>
</feature>
<feature type="binding site" evidence="1">
    <location>
        <position position="51"/>
    </location>
    <ligand>
        <name>S-adenosyl-L-methionine</name>
        <dbReference type="ChEBI" id="CHEBI:59789"/>
    </ligand>
</feature>
<feature type="binding site" evidence="1">
    <location>
        <position position="73"/>
    </location>
    <ligand>
        <name>S-adenosyl-L-methionine</name>
        <dbReference type="ChEBI" id="CHEBI:59789"/>
    </ligand>
</feature>
<feature type="binding site" evidence="1">
    <location>
        <begin position="75"/>
        <end position="76"/>
    </location>
    <ligand>
        <name>S-adenosyl-L-methionine</name>
        <dbReference type="ChEBI" id="CHEBI:59789"/>
    </ligand>
</feature>
<feature type="binding site" evidence="1">
    <location>
        <position position="81"/>
    </location>
    <ligand>
        <name>S-adenosyl-L-methionine</name>
        <dbReference type="ChEBI" id="CHEBI:59789"/>
    </ligand>
</feature>
<feature type="binding site" evidence="1">
    <location>
        <position position="99"/>
    </location>
    <ligand>
        <name>S-adenosyl-L-methionine</name>
        <dbReference type="ChEBI" id="CHEBI:59789"/>
    </ligand>
</feature>
<feature type="binding site" evidence="1">
    <location>
        <position position="128"/>
    </location>
    <ligand>
        <name>S-adenosyl-L-methionine</name>
        <dbReference type="ChEBI" id="CHEBI:59789"/>
    </ligand>
</feature>
<feature type="binding site" evidence="1">
    <location>
        <position position="151"/>
    </location>
    <ligand>
        <name>a divalent metal cation</name>
        <dbReference type="ChEBI" id="CHEBI:60240"/>
    </ligand>
</feature>
<feature type="binding site" evidence="1">
    <location>
        <position position="153"/>
    </location>
    <ligand>
        <name>S-adenosyl-L-methionine</name>
        <dbReference type="ChEBI" id="CHEBI:59789"/>
    </ligand>
</feature>
<feature type="binding site" evidence="1">
    <location>
        <position position="177"/>
    </location>
    <ligand>
        <name>a divalent metal cation</name>
        <dbReference type="ChEBI" id="CHEBI:60240"/>
    </ligand>
</feature>
<feature type="binding site" evidence="1">
    <location>
        <position position="178"/>
    </location>
    <ligand>
        <name>a divalent metal cation</name>
        <dbReference type="ChEBI" id="CHEBI:60240"/>
    </ligand>
</feature>
<keyword id="KW-0963">Cytoplasm</keyword>
<keyword id="KW-0479">Metal-binding</keyword>
<keyword id="KW-0489">Methyltransferase</keyword>
<keyword id="KW-0949">S-adenosyl-L-methionine</keyword>
<keyword id="KW-0808">Transferase</keyword>
<protein>
    <recommendedName>
        <fullName>Flavonoid 3',5'-methyltransferase</fullName>
        <ecNumber evidence="2 3">2.1.1.267</ecNumber>
    </recommendedName>
    <alternativeName>
        <fullName>Anthocyanin-O-methyltransferase</fullName>
        <shortName>VvAOMT</shortName>
    </alternativeName>
</protein>
<comment type="function">
    <text evidence="2 3">Mediates O-methylation of anthocyanins. Anthocyanins are major pigments in grapes: at ripening initiation in red grapevine berries, the exocarp turns color from green to red and then to purple due to the accumulation and extent of methylation of anthocyanins. Catalyzes both 3' and 5' O-methylation of anthocyanins, with a preference for glycosylated substrates. Active on both anthocyanins and flavonols in vitro. Most active with delphinidin 3-glucoside but also acts on cyanidin 3-glucoside, cyanidin, myricetin, quercetin and quercetin 3-glucoside. Not able to methylate flavan type skeletons with chiral centers, such as catechins or dihydroquercetin.</text>
</comment>
<comment type="catalytic activity">
    <reaction evidence="2 3">
        <text>S-adenosyl-L-methionine + a 3'-hydroxyflavonoid = S-adenosyl-L-homocysteine + a 3'-methoxyflavonoid.</text>
        <dbReference type="EC" id="2.1.1.267"/>
    </reaction>
</comment>
<comment type="catalytic activity">
    <reaction>
        <text>S-adenosyl-L-methionine + a 5'-hydroxy-3'-methoxyflavonoid = S-adenosyl-L-homocysteine + a 3',5'-dimethoxyflavonoid.</text>
        <dbReference type="EC" id="2.1.1.267"/>
    </reaction>
</comment>
<comment type="cofactor">
    <cofactor evidence="2 3">
        <name>a divalent metal cation</name>
        <dbReference type="ChEBI" id="CHEBI:60240"/>
    </cofactor>
</comment>
<comment type="biophysicochemical properties">
    <kinetics>
        <KM evidence="2 3">43 uM for cyanidin 3-glucoside</KM>
        <KM evidence="2 3">7.6 uM for cyanidin 3-glucoside</KM>
        <KM evidence="2 3">44 uM for delphinidin 3-glucoside</KM>
        <KM evidence="2 3">24 uM for quercetin 3-glucoside</KM>
        <KM evidence="2 3">2.7 uM for quercetin 3-glucoside</KM>
        <KM evidence="2 3">74 uM for cyanidin</KM>
        <KM evidence="2 3">33 uM for quercetin</KM>
        <KM evidence="2 3">19 uM for myricetin</KM>
        <text evidence="2 3">kcat is 0.090 sec(-1) with cyanidin 3-glucoside (PubMed:19525322). kcat is 2.3825 sec(-1) with cyanidin 3-glucoside (PubMed:20580386). kcat is 0.118 sec(-1) with delphinidin 3-glucoside (PubMed:19525322). kcat is 0.1 sec(-1) with quercetin 3-glucoside (PubMed:19525322). kcat is 0.8976 sec(-1) with quercetin 3-glucoside (PubMed:20580386). kcat is 0.084 sec(-1) with cyanidin (PubMed:19525322). kcat is 0.112 sec(-1) with quercetin (PubMed:19525322). kcat is 0.128 sec(-1) with myricetin (PubMed:19525322).</text>
    </kinetics>
    <phDependence>
        <text evidence="2 3">Optimum pH is 8.0-8.8.</text>
    </phDependence>
    <temperatureDependence>
        <text evidence="2 3">Optimum temperature is 49 degrees Celsius.</text>
    </temperatureDependence>
</comment>
<comment type="pathway">
    <text evidence="2 3">Pigment biosynthesis; anthocyanin biosynthesis.</text>
</comment>
<comment type="subcellular location">
    <subcellularLocation>
        <location evidence="2">Cytoplasm</location>
    </subcellularLocation>
</comment>
<comment type="developmental stage">
    <text evidence="2">Expressed in berries at start ripening (veraison), when the concentrations of methylated anthocyanins begin to increase.</text>
</comment>
<comment type="similarity">
    <text evidence="1">Belongs to the class I-like SAM-binding methyltransferase superfamily. Cation-dependent O-methyltransferase family. CCoAMT subfamily.</text>
</comment>
<sequence>MSSSSHRGILKTEALTKYLLETSAYPREHEQLKGLREATVEKHKYWSLMNVPVDEGLFISMLLKIMNAKKTIELGVFTGYSLLATALALPQDGKIIAVDPDKEAYQTGVPFIKKAGVEHKINFIQSDAMSVLNDLIADGKEEGTLDFAMVDADKENYLNYHELLLKLVRVGGIIAYDNTLWFGSVARSEEEEMMDFERAGRVHLMKLNKFLASDPRVELSHLSIGDGVALCRRLY</sequence>
<dbReference type="EC" id="2.1.1.267" evidence="2 3"/>
<dbReference type="EMBL" id="FJ460168">
    <property type="protein sequence ID" value="ACO52469.1"/>
    <property type="molecule type" value="mRNA"/>
</dbReference>
<dbReference type="EMBL" id="HM142924">
    <property type="protein sequence ID" value="ADJ57332.1"/>
    <property type="molecule type" value="mRNA"/>
</dbReference>
<dbReference type="SMR" id="C7AE94"/>
<dbReference type="PaxDb" id="29760-VIT_01s0010g03510.t01"/>
<dbReference type="EnsemblPlants" id="Vitvi01g04438_t001">
    <property type="protein sequence ID" value="Vitvi01g04438_P001"/>
    <property type="gene ID" value="Vitvi01g04438"/>
</dbReference>
<dbReference type="Gramene" id="Vitvi01g04438_t001">
    <property type="protein sequence ID" value="Vitvi01g04438_P001"/>
    <property type="gene ID" value="Vitvi01g04438"/>
</dbReference>
<dbReference type="eggNOG" id="KOG1663">
    <property type="taxonomic scope" value="Eukaryota"/>
</dbReference>
<dbReference type="OrthoDB" id="10251242at2759"/>
<dbReference type="BRENDA" id="2.1.1.267">
    <property type="organism ID" value="6671"/>
</dbReference>
<dbReference type="SABIO-RK" id="C7AE94"/>
<dbReference type="UniPathway" id="UPA00009"/>
<dbReference type="ExpressionAtlas" id="C7AE94">
    <property type="expression patterns" value="baseline and differential"/>
</dbReference>
<dbReference type="GO" id="GO:0005737">
    <property type="term" value="C:cytoplasm"/>
    <property type="evidence" value="ECO:0000314"/>
    <property type="project" value="UniProtKB"/>
</dbReference>
<dbReference type="GO" id="GO:0046872">
    <property type="term" value="F:metal ion binding"/>
    <property type="evidence" value="ECO:0000314"/>
    <property type="project" value="UniProtKB"/>
</dbReference>
<dbReference type="GO" id="GO:0008171">
    <property type="term" value="F:O-methyltransferase activity"/>
    <property type="evidence" value="ECO:0000314"/>
    <property type="project" value="UniProtKB"/>
</dbReference>
<dbReference type="GO" id="GO:0009718">
    <property type="term" value="P:anthocyanin-containing compound biosynthetic process"/>
    <property type="evidence" value="ECO:0000314"/>
    <property type="project" value="UniProtKB"/>
</dbReference>
<dbReference type="GO" id="GO:0033485">
    <property type="term" value="P:cyanidin 3-O-glucoside biosynthetic process"/>
    <property type="evidence" value="ECO:0000314"/>
    <property type="project" value="UniProtKB"/>
</dbReference>
<dbReference type="GO" id="GO:0033486">
    <property type="term" value="P:delphinidin 3-O-glucoside biosynthetic process"/>
    <property type="evidence" value="ECO:0000314"/>
    <property type="project" value="UniProtKB"/>
</dbReference>
<dbReference type="GO" id="GO:0032259">
    <property type="term" value="P:methylation"/>
    <property type="evidence" value="ECO:0007669"/>
    <property type="project" value="UniProtKB-KW"/>
</dbReference>
<dbReference type="GO" id="GO:0043473">
    <property type="term" value="P:pigmentation"/>
    <property type="evidence" value="ECO:0000314"/>
    <property type="project" value="UniProtKB"/>
</dbReference>
<dbReference type="CDD" id="cd02440">
    <property type="entry name" value="AdoMet_MTases"/>
    <property type="match status" value="1"/>
</dbReference>
<dbReference type="FunFam" id="3.40.50.150:FF:000147">
    <property type="entry name" value="Caffeoyl-CoA O-methyltransferase 1"/>
    <property type="match status" value="1"/>
</dbReference>
<dbReference type="Gene3D" id="3.40.50.150">
    <property type="entry name" value="Vaccinia Virus protein VP39"/>
    <property type="match status" value="1"/>
</dbReference>
<dbReference type="InterPro" id="IPR050362">
    <property type="entry name" value="Cation-dep_OMT"/>
</dbReference>
<dbReference type="InterPro" id="IPR018247">
    <property type="entry name" value="EF_Hand_1_Ca_BS"/>
</dbReference>
<dbReference type="InterPro" id="IPR029063">
    <property type="entry name" value="SAM-dependent_MTases_sf"/>
</dbReference>
<dbReference type="InterPro" id="IPR002935">
    <property type="entry name" value="SAM_O-MeTrfase"/>
</dbReference>
<dbReference type="PANTHER" id="PTHR10509">
    <property type="entry name" value="O-METHYLTRANSFERASE-RELATED"/>
    <property type="match status" value="1"/>
</dbReference>
<dbReference type="PANTHER" id="PTHR10509:SF34">
    <property type="entry name" value="TAPETUM-SPECIFIC METHYLTRANSFERASE 1"/>
    <property type="match status" value="1"/>
</dbReference>
<dbReference type="Pfam" id="PF01596">
    <property type="entry name" value="Methyltransf_3"/>
    <property type="match status" value="1"/>
</dbReference>
<dbReference type="SUPFAM" id="SSF53335">
    <property type="entry name" value="S-adenosyl-L-methionine-dependent methyltransferases"/>
    <property type="match status" value="1"/>
</dbReference>
<dbReference type="PROSITE" id="PS51682">
    <property type="entry name" value="SAM_OMT_I"/>
    <property type="match status" value="1"/>
</dbReference>
<proteinExistence type="evidence at protein level"/>
<accession>C7AE94</accession>
<name>FAOMT_VITVI</name>
<gene>
    <name type="primary">FAOMT</name>
</gene>
<organism>
    <name type="scientific">Vitis vinifera</name>
    <name type="common">Grape</name>
    <dbReference type="NCBI Taxonomy" id="29760"/>
    <lineage>
        <taxon>Eukaryota</taxon>
        <taxon>Viridiplantae</taxon>
        <taxon>Streptophyta</taxon>
        <taxon>Embryophyta</taxon>
        <taxon>Tracheophyta</taxon>
        <taxon>Spermatophyta</taxon>
        <taxon>Magnoliopsida</taxon>
        <taxon>eudicotyledons</taxon>
        <taxon>Gunneridae</taxon>
        <taxon>Pentapetalae</taxon>
        <taxon>rosids</taxon>
        <taxon>Vitales</taxon>
        <taxon>Vitaceae</taxon>
        <taxon>Viteae</taxon>
        <taxon>Vitis</taxon>
    </lineage>
</organism>
<reference key="1">
    <citation type="journal article" date="2009" name="Plant Physiol.">
        <title>A novel cation-dependent o-methyltransferase involved in anthocyanin methylation in grapevine.</title>
        <authorList>
            <person name="Hugueney P."/>
            <person name="Provenzano S."/>
            <person name="Verries C."/>
            <person name="Ferrandino A."/>
            <person name="Meudec E."/>
            <person name="Batelli G."/>
            <person name="Merdinoglu D."/>
            <person name="Cheynier V."/>
            <person name="Schubert A."/>
            <person name="Ageorges A."/>
        </authorList>
    </citation>
    <scope>NUCLEOTIDE SEQUENCE [MRNA]</scope>
    <scope>FUNCTION</scope>
    <scope>CATALYTIC ACTIVITY</scope>
    <scope>BIOPHYSICOCHEMICAL PROPERTIES</scope>
    <scope>PATHWAY</scope>
    <scope>COFACTOR</scope>
    <scope>SUBCELLULAR LOCATION</scope>
    <scope>DEVELOPMENTAL STAGE</scope>
    <source>
        <strain>cv. Syrah</strain>
    </source>
</reference>
<reference key="2">
    <citation type="journal article" date="2010" name="Phytochemistry">
        <title>Characterization of a Vitis vinifera cv. Cabernet Sauvignon 3',5'-O-methyltransferase showing strong preference for anthocyanins and glycosylated flavonols.</title>
        <authorList>
            <person name="Lucker J."/>
            <person name="Martens S."/>
            <person name="Lund S.T."/>
        </authorList>
    </citation>
    <scope>NUCLEOTIDE SEQUENCE [MRNA]</scope>
    <scope>FUNCTION</scope>
    <scope>CATALYTIC ACTIVITY</scope>
    <scope>BIOPHYSICOCHEMICAL PROPERTIES</scope>
    <scope>COFACTOR</scope>
    <scope>PATHWAY</scope>
    <source>
        <strain>cv. Cabernet Sauvignon</strain>
    </source>
</reference>
<evidence type="ECO:0000255" key="1">
    <source>
        <dbReference type="PROSITE-ProRule" id="PRU01019"/>
    </source>
</evidence>
<evidence type="ECO:0000269" key="2">
    <source>
    </source>
</evidence>
<evidence type="ECO:0000269" key="3">
    <source>
    </source>
</evidence>